<comment type="catalytic activity">
    <reaction evidence="1">
        <text>Hydrolysis of terminal, non-reducing beta-D-glucosyl residues with release of beta-D-glucose.</text>
        <dbReference type="EC" id="3.2.1.21"/>
    </reaction>
</comment>
<comment type="similarity">
    <text evidence="8">Belongs to the glycosyl hydrolase 1 family.</text>
</comment>
<protein>
    <recommendedName>
        <fullName evidence="7">Beta-glucosidase 31</fullName>
        <shortName evidence="7">AtBGLU31</shortName>
        <ecNumber evidence="1">3.2.1.21</ecNumber>
    </recommendedName>
</protein>
<reference key="1">
    <citation type="journal article" date="1998" name="DNA Res.">
        <title>Structural analysis of Arabidopsis thaliana chromosome 5. IV. Sequence features of the regions of 1,456,315 bp covered by nineteen physically assigned P1 and TAC clones.</title>
        <authorList>
            <person name="Sato S."/>
            <person name="Kaneko T."/>
            <person name="Kotani H."/>
            <person name="Nakamura Y."/>
            <person name="Asamizu E."/>
            <person name="Miyajima N."/>
            <person name="Tabata S."/>
        </authorList>
    </citation>
    <scope>NUCLEOTIDE SEQUENCE [LARGE SCALE GENOMIC DNA]</scope>
    <source>
        <strain>cv. Columbia</strain>
    </source>
</reference>
<reference key="2">
    <citation type="journal article" date="2017" name="Plant J.">
        <title>Araport11: a complete reannotation of the Arabidopsis thaliana reference genome.</title>
        <authorList>
            <person name="Cheng C.Y."/>
            <person name="Krishnakumar V."/>
            <person name="Chan A.P."/>
            <person name="Thibaud-Nissen F."/>
            <person name="Schobel S."/>
            <person name="Town C.D."/>
        </authorList>
    </citation>
    <scope>GENOME REANNOTATION</scope>
    <source>
        <strain>cv. Columbia</strain>
    </source>
</reference>
<reference key="3">
    <citation type="journal article" date="2006" name="Plant Biotechnol. J.">
        <title>Simultaneous high-throughput recombinational cloning of open reading frames in closed and open configurations.</title>
        <authorList>
            <person name="Underwood B.A."/>
            <person name="Vanderhaeghen R."/>
            <person name="Whitford R."/>
            <person name="Town C.D."/>
            <person name="Hilson P."/>
        </authorList>
    </citation>
    <scope>NUCLEOTIDE SEQUENCE [LARGE SCALE MRNA]</scope>
    <source>
        <strain>cv. Columbia</strain>
    </source>
</reference>
<reference key="4">
    <citation type="journal article" date="2004" name="Plant Mol. Biol.">
        <title>Functional genomic analysis of Arabidopsis thaliana glycoside hydrolase family 1.</title>
        <authorList>
            <person name="Xu Z."/>
            <person name="Escamilla-Trevino L.L."/>
            <person name="Zeng L."/>
            <person name="Lalgondar M."/>
            <person name="Bevan D.R."/>
            <person name="Winkel B.S.J."/>
            <person name="Mohamed A."/>
            <person name="Cheng C.-L."/>
            <person name="Shih M.-C."/>
            <person name="Poulton J.E."/>
            <person name="Esen A."/>
        </authorList>
    </citation>
    <scope>GENE FAMILY</scope>
    <scope>NOMENCLATURE</scope>
</reference>
<dbReference type="EC" id="3.2.1.21" evidence="1"/>
<dbReference type="EMBL" id="AB010068">
    <property type="protein sequence ID" value="BAB11206.1"/>
    <property type="molecule type" value="Genomic_DNA"/>
</dbReference>
<dbReference type="EMBL" id="CP002688">
    <property type="protein sequence ID" value="AED93323.1"/>
    <property type="molecule type" value="Genomic_DNA"/>
</dbReference>
<dbReference type="EMBL" id="DQ446980">
    <property type="protein sequence ID" value="ABE66178.1"/>
    <property type="molecule type" value="mRNA"/>
</dbReference>
<dbReference type="RefSeq" id="NP_197842.1">
    <property type="nucleotide sequence ID" value="NM_122362.2"/>
</dbReference>
<dbReference type="SMR" id="Q9FLU9"/>
<dbReference type="FunCoup" id="Q9FLU9">
    <property type="interactions" value="418"/>
</dbReference>
<dbReference type="STRING" id="3702.Q9FLU9"/>
<dbReference type="CAZy" id="GH1">
    <property type="family name" value="Glycoside Hydrolase Family 1"/>
</dbReference>
<dbReference type="GlyCosmos" id="Q9FLU9">
    <property type="glycosylation" value="3 sites, No reported glycans"/>
</dbReference>
<dbReference type="GlyGen" id="Q9FLU9">
    <property type="glycosylation" value="3 sites"/>
</dbReference>
<dbReference type="PaxDb" id="3702-AT5G24540.1"/>
<dbReference type="EnsemblPlants" id="AT5G24540.1">
    <property type="protein sequence ID" value="AT5G24540.1"/>
    <property type="gene ID" value="AT5G24540"/>
</dbReference>
<dbReference type="GeneID" id="832525"/>
<dbReference type="Gramene" id="AT5G24540.1">
    <property type="protein sequence ID" value="AT5G24540.1"/>
    <property type="gene ID" value="AT5G24540"/>
</dbReference>
<dbReference type="KEGG" id="ath:AT5G24540"/>
<dbReference type="Araport" id="AT5G24540"/>
<dbReference type="TAIR" id="AT5G24540">
    <property type="gene designation" value="BGLU31"/>
</dbReference>
<dbReference type="eggNOG" id="KOG0626">
    <property type="taxonomic scope" value="Eukaryota"/>
</dbReference>
<dbReference type="HOGENOM" id="CLU_001859_1_0_1"/>
<dbReference type="InParanoid" id="Q9FLU9"/>
<dbReference type="OMA" id="IHRPLDW"/>
<dbReference type="OrthoDB" id="65569at2759"/>
<dbReference type="PhylomeDB" id="Q9FLU9"/>
<dbReference type="BioCyc" id="ARA:AT5G24540-MONOMER"/>
<dbReference type="PRO" id="PR:Q9FLU9"/>
<dbReference type="Proteomes" id="UP000006548">
    <property type="component" value="Chromosome 5"/>
</dbReference>
<dbReference type="ExpressionAtlas" id="Q9FLU9">
    <property type="expression patterns" value="baseline and differential"/>
</dbReference>
<dbReference type="GO" id="GO:0008422">
    <property type="term" value="F:beta-glucosidase activity"/>
    <property type="evidence" value="ECO:0007669"/>
    <property type="project" value="UniProtKB-EC"/>
</dbReference>
<dbReference type="GO" id="GO:0005975">
    <property type="term" value="P:carbohydrate metabolic process"/>
    <property type="evidence" value="ECO:0007669"/>
    <property type="project" value="InterPro"/>
</dbReference>
<dbReference type="GO" id="GO:0051707">
    <property type="term" value="P:response to other organism"/>
    <property type="evidence" value="ECO:0000270"/>
    <property type="project" value="TAIR"/>
</dbReference>
<dbReference type="FunFam" id="3.20.20.80:FF:000022">
    <property type="entry name" value="Beta-glucosidase 11"/>
    <property type="match status" value="1"/>
</dbReference>
<dbReference type="Gene3D" id="3.20.20.80">
    <property type="entry name" value="Glycosidases"/>
    <property type="match status" value="1"/>
</dbReference>
<dbReference type="InterPro" id="IPR001360">
    <property type="entry name" value="Glyco_hydro_1"/>
</dbReference>
<dbReference type="InterPro" id="IPR033132">
    <property type="entry name" value="Glyco_hydro_1_N_CS"/>
</dbReference>
<dbReference type="InterPro" id="IPR017853">
    <property type="entry name" value="Glycoside_hydrolase_SF"/>
</dbReference>
<dbReference type="PANTHER" id="PTHR10353:SF318">
    <property type="entry name" value="BETA-GLUCOSIDASE 31-RELATED"/>
    <property type="match status" value="1"/>
</dbReference>
<dbReference type="PANTHER" id="PTHR10353">
    <property type="entry name" value="GLYCOSYL HYDROLASE"/>
    <property type="match status" value="1"/>
</dbReference>
<dbReference type="Pfam" id="PF00232">
    <property type="entry name" value="Glyco_hydro_1"/>
    <property type="match status" value="1"/>
</dbReference>
<dbReference type="PRINTS" id="PR00131">
    <property type="entry name" value="GLHYDRLASE1"/>
</dbReference>
<dbReference type="SUPFAM" id="SSF51445">
    <property type="entry name" value="(Trans)glycosidases"/>
    <property type="match status" value="1"/>
</dbReference>
<dbReference type="PROSITE" id="PS00653">
    <property type="entry name" value="GLYCOSYL_HYDROL_F1_2"/>
    <property type="match status" value="1"/>
</dbReference>
<sequence length="534" mass="61872">MAIKLIALVITLCVASWDVAQGRSLRFSTTPLNRYSFPPHFDFGVASSAYQYEGAVEEGGRSLSIWDNFTHAFPERTNMDNGDVAVDFYHRYKEDIKLIKEMNMDSFRFSLSWSRILPSGKLSDGVNKEGVQFYKNLIDELIENGIKPFVTIYHWDIPQALDDEYGSFLSPRIIDDFRNYARFCFQEFGDKVSMWTTFNEPYVYSVSGYDAGNKAMGRCSKWVNSLCIAGDSGTEPYLVSHHLLLAHAAAVEEFRKCDKISQDSKIGIVLSPYWFEPYDSASNADKEAVERALAFNIGWHLSPLVFGDYPETIKISAGNRLPSFTKEQSMMVKNSFDFIGVNYYTARFVAHDLNVDISRPRFMTDQHLQYKLTNRTGDTISLESDGTKILWSYPEGLRKILNYIKNKYNNPTIYITENGFDDYENGTVTREEILEDTKRIEYHQKHLQELQKAITEDGCDVKGYFTWSLLDNFEWEHGYAVRFGLYYVDYKNGLQRHAKHSAMWFKHFLERSGKPMPMDLFKSVKRWWSTLQMI</sequence>
<evidence type="ECO:0000250" key="1">
    <source>
        <dbReference type="UniProtKB" id="O64879"/>
    </source>
</evidence>
<evidence type="ECO:0000250" key="2">
    <source>
        <dbReference type="UniProtKB" id="Q1XH05"/>
    </source>
</evidence>
<evidence type="ECO:0000250" key="3">
    <source>
        <dbReference type="UniProtKB" id="Q7XSK0"/>
    </source>
</evidence>
<evidence type="ECO:0000250" key="4">
    <source>
        <dbReference type="UniProtKB" id="Q9SPP9"/>
    </source>
</evidence>
<evidence type="ECO:0000255" key="5"/>
<evidence type="ECO:0000255" key="6">
    <source>
        <dbReference type="PROSITE-ProRule" id="PRU00498"/>
    </source>
</evidence>
<evidence type="ECO:0000303" key="7">
    <source>
    </source>
</evidence>
<evidence type="ECO:0000305" key="8"/>
<evidence type="ECO:0000312" key="9">
    <source>
        <dbReference type="Araport" id="AT5G24540"/>
    </source>
</evidence>
<evidence type="ECO:0000312" key="10">
    <source>
        <dbReference type="EMBL" id="BAB11206.1"/>
    </source>
</evidence>
<organism>
    <name type="scientific">Arabidopsis thaliana</name>
    <name type="common">Mouse-ear cress</name>
    <dbReference type="NCBI Taxonomy" id="3702"/>
    <lineage>
        <taxon>Eukaryota</taxon>
        <taxon>Viridiplantae</taxon>
        <taxon>Streptophyta</taxon>
        <taxon>Embryophyta</taxon>
        <taxon>Tracheophyta</taxon>
        <taxon>Spermatophyta</taxon>
        <taxon>Magnoliopsida</taxon>
        <taxon>eudicotyledons</taxon>
        <taxon>Gunneridae</taxon>
        <taxon>Pentapetalae</taxon>
        <taxon>rosids</taxon>
        <taxon>malvids</taxon>
        <taxon>Brassicales</taxon>
        <taxon>Brassicaceae</taxon>
        <taxon>Camelineae</taxon>
        <taxon>Arabidopsis</taxon>
    </lineage>
</organism>
<accession>Q9FLU9</accession>
<gene>
    <name evidence="7" type="primary">BGLU31</name>
    <name evidence="9" type="ordered locus">At5g24540</name>
    <name evidence="10" type="ORF">K18P6.7</name>
</gene>
<name>BGL31_ARATH</name>
<feature type="signal peptide" evidence="5">
    <location>
        <begin position="1"/>
        <end position="22"/>
    </location>
</feature>
<feature type="chain" id="PRO_0000389593" description="Beta-glucosidase 31">
    <location>
        <begin position="23"/>
        <end position="534"/>
    </location>
</feature>
<feature type="active site" description="Proton donor" evidence="3">
    <location>
        <position position="200"/>
    </location>
</feature>
<feature type="active site" description="Nucleophile" evidence="3">
    <location>
        <position position="417"/>
    </location>
</feature>
<feature type="binding site" evidence="3">
    <location>
        <position position="51"/>
    </location>
    <ligand>
        <name>a beta-D-glucoside</name>
        <dbReference type="ChEBI" id="CHEBI:22798"/>
    </ligand>
</feature>
<feature type="binding site" evidence="3">
    <location>
        <position position="154"/>
    </location>
    <ligand>
        <name>a beta-D-glucoside</name>
        <dbReference type="ChEBI" id="CHEBI:22798"/>
    </ligand>
</feature>
<feature type="binding site" evidence="3">
    <location>
        <begin position="199"/>
        <end position="200"/>
    </location>
    <ligand>
        <name>a beta-D-glucoside</name>
        <dbReference type="ChEBI" id="CHEBI:22798"/>
    </ligand>
</feature>
<feature type="binding site" evidence="3">
    <location>
        <position position="344"/>
    </location>
    <ligand>
        <name>a beta-D-glucoside</name>
        <dbReference type="ChEBI" id="CHEBI:22798"/>
    </ligand>
</feature>
<feature type="binding site" evidence="4">
    <location>
        <position position="417"/>
    </location>
    <ligand>
        <name>a beta-D-glucoside</name>
        <dbReference type="ChEBI" id="CHEBI:22798"/>
    </ligand>
</feature>
<feature type="binding site" evidence="3">
    <location>
        <position position="467"/>
    </location>
    <ligand>
        <name>a beta-D-glucoside</name>
        <dbReference type="ChEBI" id="CHEBI:22798"/>
    </ligand>
</feature>
<feature type="binding site" evidence="3">
    <location>
        <begin position="474"/>
        <end position="475"/>
    </location>
    <ligand>
        <name>a beta-D-glucoside</name>
        <dbReference type="ChEBI" id="CHEBI:22798"/>
    </ligand>
</feature>
<feature type="binding site" evidence="2">
    <location>
        <position position="483"/>
    </location>
    <ligand>
        <name>a beta-D-glucoside</name>
        <dbReference type="ChEBI" id="CHEBI:22798"/>
    </ligand>
</feature>
<feature type="glycosylation site" description="N-linked (GlcNAc...) asparagine" evidence="6">
    <location>
        <position position="68"/>
    </location>
</feature>
<feature type="glycosylation site" description="N-linked (GlcNAc...) asparagine" evidence="6">
    <location>
        <position position="374"/>
    </location>
</feature>
<feature type="glycosylation site" description="N-linked (GlcNAc...) asparagine" evidence="6">
    <location>
        <position position="425"/>
    </location>
</feature>
<feature type="disulfide bond" evidence="3">
    <location>
        <begin position="219"/>
        <end position="227"/>
    </location>
</feature>
<keyword id="KW-1015">Disulfide bond</keyword>
<keyword id="KW-0325">Glycoprotein</keyword>
<keyword id="KW-0326">Glycosidase</keyword>
<keyword id="KW-0378">Hydrolase</keyword>
<keyword id="KW-1185">Reference proteome</keyword>
<keyword id="KW-0732">Signal</keyword>
<proteinExistence type="evidence at transcript level"/>